<proteinExistence type="evidence at protein level"/>
<protein>
    <recommendedName>
        <fullName evidence="8">Tyrosine isonitrile desaturase</fullName>
        <ecNumber evidence="4">1.14.20.9</ecNumber>
    </recommendedName>
    <alternativeName>
        <fullName evidence="7">PaPvcB</fullName>
    </alternativeName>
    <alternativeName>
        <fullName evidence="8">Paerucumarin biosynthesis protein PvcB</fullName>
    </alternativeName>
</protein>
<reference key="1">
    <citation type="journal article" date="2000" name="Nature">
        <title>Complete genome sequence of Pseudomonas aeruginosa PAO1, an opportunistic pathogen.</title>
        <authorList>
            <person name="Stover C.K."/>
            <person name="Pham X.-Q.T."/>
            <person name="Erwin A.L."/>
            <person name="Mizoguchi S.D."/>
            <person name="Warrener P."/>
            <person name="Hickey M.J."/>
            <person name="Brinkman F.S.L."/>
            <person name="Hufnagle W.O."/>
            <person name="Kowalik D.J."/>
            <person name="Lagrou M."/>
            <person name="Garber R.L."/>
            <person name="Goltry L."/>
            <person name="Tolentino E."/>
            <person name="Westbrock-Wadman S."/>
            <person name="Yuan Y."/>
            <person name="Brody L.L."/>
            <person name="Coulter S.N."/>
            <person name="Folger K.R."/>
            <person name="Kas A."/>
            <person name="Larbig K."/>
            <person name="Lim R.M."/>
            <person name="Smith K.A."/>
            <person name="Spencer D.H."/>
            <person name="Wong G.K.-S."/>
            <person name="Wu Z."/>
            <person name="Paulsen I.T."/>
            <person name="Reizer J."/>
            <person name="Saier M.H. Jr."/>
            <person name="Hancock R.E.W."/>
            <person name="Lory S."/>
            <person name="Olson M.V."/>
        </authorList>
    </citation>
    <scope>NUCLEOTIDE SEQUENCE [LARGE SCALE GENOMIC DNA]</scope>
    <source>
        <strain>ATCC 15692 / DSM 22644 / CIP 104116 / JCM 14847 / LMG 12228 / 1C / PRS 101 / PAO1</strain>
    </source>
</reference>
<reference key="2">
    <citation type="journal article" date="2008" name="J. Bacteriol.">
        <title>Paerucumarin, a new metabolite produced by the pvc gene cluster from Pseudomonas aeruginosa.</title>
        <authorList>
            <person name="Clarke-Pearson M.F."/>
            <person name="Brady S.F."/>
        </authorList>
    </citation>
    <scope>FUNCTION</scope>
</reference>
<reference key="3">
    <citation type="journal article" date="2020" name="Microb. Pathog.">
        <title>Mutation in pvcABCD operon of Pseudomonas aeruginosa modulates MexEF-OprN efflux system and hence resistance to chloramphenicol and ciprofloxacin.</title>
        <authorList>
            <person name="Iftikhar A."/>
            <person name="Asif A."/>
            <person name="Manzoor A."/>
            <person name="Azeem M."/>
            <person name="Sarwar G."/>
            <person name="Rashid N."/>
            <person name="Qaisar U."/>
        </authorList>
    </citation>
    <scope>DISRUPTION PHENOTYPE</scope>
    <source>
        <strain>MPAO1</strain>
    </source>
</reference>
<reference evidence="11" key="4">
    <citation type="journal article" date="2008" name="J. Mol. Biol.">
        <title>Three-dimensional structures of Pseudomonas aeruginosa PvcA and PvcB, two proteins involved in the synthesis of 2-isocyano-6,7-dihydroxycoumarin.</title>
        <authorList>
            <person name="Drake E.J."/>
            <person name="Gulick A.M."/>
        </authorList>
    </citation>
    <scope>X-RAY CRYSTALLOGRAPHY (2.50 ANGSTROMS)</scope>
    <scope>FUNCTION</scope>
    <scope>SUBUNIT</scope>
    <scope>DISRUPTION PHENOTYPE</scope>
    <source>
        <strain>ATCC 15692 / DSM 22644 / CIP 104116 / JCM 14847 / LMG 12228 / 1C / PRS 101 / PAO1</strain>
    </source>
</reference>
<reference evidence="12" key="5">
    <citation type="journal article" date="2015" name="Biochemistry">
        <title>Examining reaction specificity in PvcB, a source of diversity in isonitrile-containing natural products.</title>
        <authorList>
            <person name="Zhu J."/>
            <person name="Lippa G.M."/>
            <person name="Gulick A.M."/>
            <person name="Tipton P.A."/>
        </authorList>
    </citation>
    <scope>X-RAY CRYSTALLOGRAPHY (2.05 ANGSTROMS)</scope>
    <scope>FUNCTION</scope>
    <scope>CATALYTIC ACTIVITY</scope>
    <scope>COFACTOR</scope>
    <scope>BIOPHYSICOCHEMICAL PROPERTIES</scope>
    <source>
        <strain>PAK</strain>
    </source>
</reference>
<keyword id="KW-0002">3D-structure</keyword>
<keyword id="KW-0408">Iron</keyword>
<keyword id="KW-0479">Metal-binding</keyword>
<keyword id="KW-0560">Oxidoreductase</keyword>
<keyword id="KW-1185">Reference proteome</keyword>
<name>PVCB_PSEAE</name>
<accession>Q9I1L4</accession>
<accession>A0A0M3KL23</accession>
<organism>
    <name type="scientific">Pseudomonas aeruginosa (strain ATCC 15692 / DSM 22644 / CIP 104116 / JCM 14847 / LMG 12228 / 1C / PRS 101 / PAO1)</name>
    <dbReference type="NCBI Taxonomy" id="208964"/>
    <lineage>
        <taxon>Bacteria</taxon>
        <taxon>Pseudomonadati</taxon>
        <taxon>Pseudomonadota</taxon>
        <taxon>Gammaproteobacteria</taxon>
        <taxon>Pseudomonadales</taxon>
        <taxon>Pseudomonadaceae</taxon>
        <taxon>Pseudomonas</taxon>
    </lineage>
</organism>
<dbReference type="EC" id="1.14.20.9" evidence="4"/>
<dbReference type="EMBL" id="AE004091">
    <property type="protein sequence ID" value="AAG05643.1"/>
    <property type="molecule type" value="Genomic_DNA"/>
</dbReference>
<dbReference type="PIR" id="A83364">
    <property type="entry name" value="A83364"/>
</dbReference>
<dbReference type="RefSeq" id="NP_250945.1">
    <property type="nucleotide sequence ID" value="NC_002516.2"/>
</dbReference>
<dbReference type="RefSeq" id="WP_003115812.1">
    <property type="nucleotide sequence ID" value="NZ_QZGE01000014.1"/>
</dbReference>
<dbReference type="PDB" id="3EAT">
    <property type="method" value="X-ray"/>
    <property type="resolution" value="2.50 A"/>
    <property type="chains" value="X=1-291"/>
</dbReference>
<dbReference type="PDB" id="4YLM">
    <property type="method" value="X-ray"/>
    <property type="resolution" value="2.05 A"/>
    <property type="chains" value="X=1-291"/>
</dbReference>
<dbReference type="PDBsum" id="3EAT"/>
<dbReference type="PDBsum" id="4YLM"/>
<dbReference type="SMR" id="Q9I1L4"/>
<dbReference type="STRING" id="208964.PA2255"/>
<dbReference type="PaxDb" id="208964-PA2255"/>
<dbReference type="GeneID" id="878457"/>
<dbReference type="KEGG" id="pae:PA2255"/>
<dbReference type="PATRIC" id="fig|208964.12.peg.2357"/>
<dbReference type="PseudoCAP" id="PA2255"/>
<dbReference type="HOGENOM" id="CLU_077936_0_0_6"/>
<dbReference type="InParanoid" id="Q9I1L4"/>
<dbReference type="OrthoDB" id="581608at2"/>
<dbReference type="PhylomeDB" id="Q9I1L4"/>
<dbReference type="BioCyc" id="MetaCyc:MONOMER-20394"/>
<dbReference type="BioCyc" id="PAER208964:G1FZ6-2294-MONOMER"/>
<dbReference type="BRENDA" id="1.14.20.10">
    <property type="organism ID" value="5087"/>
</dbReference>
<dbReference type="BRENDA" id="1.14.20.9">
    <property type="organism ID" value="5087"/>
</dbReference>
<dbReference type="EvolutionaryTrace" id="Q9I1L4"/>
<dbReference type="Proteomes" id="UP000002438">
    <property type="component" value="Chromosome"/>
</dbReference>
<dbReference type="GO" id="GO:0046872">
    <property type="term" value="F:metal ion binding"/>
    <property type="evidence" value="ECO:0007669"/>
    <property type="project" value="UniProtKB-KW"/>
</dbReference>
<dbReference type="GO" id="GO:0016491">
    <property type="term" value="F:oxidoreductase activity"/>
    <property type="evidence" value="ECO:0007669"/>
    <property type="project" value="UniProtKB-KW"/>
</dbReference>
<dbReference type="CDD" id="cd00250">
    <property type="entry name" value="CAS_like"/>
    <property type="match status" value="1"/>
</dbReference>
<dbReference type="Gene3D" id="3.60.130.10">
    <property type="entry name" value="Clavaminate synthase-like"/>
    <property type="match status" value="1"/>
</dbReference>
<dbReference type="InterPro" id="IPR050411">
    <property type="entry name" value="AlphaKG_dependent_hydroxylases"/>
</dbReference>
<dbReference type="InterPro" id="IPR042098">
    <property type="entry name" value="TauD-like_sf"/>
</dbReference>
<dbReference type="InterPro" id="IPR003819">
    <property type="entry name" value="TauD/TfdA-like"/>
</dbReference>
<dbReference type="PANTHER" id="PTHR10696">
    <property type="entry name" value="GAMMA-BUTYROBETAINE HYDROXYLASE-RELATED"/>
    <property type="match status" value="1"/>
</dbReference>
<dbReference type="PANTHER" id="PTHR10696:SF53">
    <property type="entry name" value="TYROSINE ISONITRILE DESATURASE"/>
    <property type="match status" value="1"/>
</dbReference>
<dbReference type="Pfam" id="PF02668">
    <property type="entry name" value="TauD"/>
    <property type="match status" value="1"/>
</dbReference>
<dbReference type="SUPFAM" id="SSF51197">
    <property type="entry name" value="Clavaminate synthase-like"/>
    <property type="match status" value="1"/>
</dbReference>
<sequence length="291" mass="33137">MNAYLSDQPVRLSPLRDEQGNQPRFGLLLEPGRPGMHVGELPAQWLKGLARSHHLLLLRGFAAFADAESLTRYCHDFGEVMLWPFGAVLELVEQEGAEDHIFANNYVPLHWDGMYLETVPEFQVFHCVDAPGDSDGGRTTFSSTPAALQLADSSELELWRRASGRYQRSAAHYSSRSAAPIVERHPRREFPILRFCEPPVEGDASFINPSEFHYDGIAPEQRGELLASLRRCLYHPQAHYAHRWRSDDLVIADNLTLLHGREAFAHRAPRHLRRVHIHAEPALRNPHLQRD</sequence>
<evidence type="ECO:0000250" key="1">
    <source>
        <dbReference type="UniProtKB" id="Q9XB59"/>
    </source>
</evidence>
<evidence type="ECO:0000269" key="2">
    <source>
    </source>
</evidence>
<evidence type="ECO:0000269" key="3">
    <source>
    </source>
</evidence>
<evidence type="ECO:0000269" key="4">
    <source>
    </source>
</evidence>
<evidence type="ECO:0000269" key="5">
    <source>
    </source>
</evidence>
<evidence type="ECO:0000303" key="6">
    <source>
    </source>
</evidence>
<evidence type="ECO:0000303" key="7">
    <source>
    </source>
</evidence>
<evidence type="ECO:0000305" key="8"/>
<evidence type="ECO:0000305" key="9">
    <source>
    </source>
</evidence>
<evidence type="ECO:0000312" key="10">
    <source>
        <dbReference type="EMBL" id="AAG05643.1"/>
    </source>
</evidence>
<evidence type="ECO:0007744" key="11">
    <source>
        <dbReference type="PDB" id="3EAT"/>
    </source>
</evidence>
<evidence type="ECO:0007744" key="12">
    <source>
        <dbReference type="PDB" id="4YLM"/>
    </source>
</evidence>
<evidence type="ECO:0007829" key="13">
    <source>
        <dbReference type="PDB" id="3EAT"/>
    </source>
</evidence>
<evidence type="ECO:0007829" key="14">
    <source>
        <dbReference type="PDB" id="4YLM"/>
    </source>
</evidence>
<gene>
    <name evidence="6" type="primary">pvcB</name>
    <name evidence="10" type="ordered locus">PA2255</name>
</gene>
<feature type="chain" id="PRO_0000453970" description="Tyrosine isonitrile desaturase">
    <location>
        <begin position="1"/>
        <end position="291"/>
    </location>
</feature>
<feature type="binding site" evidence="1">
    <location>
        <position position="110"/>
    </location>
    <ligand>
        <name>Fe cation</name>
        <dbReference type="ChEBI" id="CHEBI:24875"/>
        <note>catalytic</note>
    </ligand>
</feature>
<feature type="binding site" evidence="1">
    <location>
        <position position="112"/>
    </location>
    <ligand>
        <name>Fe cation</name>
        <dbReference type="ChEBI" id="CHEBI:24875"/>
        <note>catalytic</note>
    </ligand>
</feature>
<feature type="binding site" evidence="1">
    <location>
        <position position="259"/>
    </location>
    <ligand>
        <name>Fe cation</name>
        <dbReference type="ChEBI" id="CHEBI:24875"/>
        <note>catalytic</note>
    </ligand>
</feature>
<feature type="strand" evidence="14">
    <location>
        <begin position="7"/>
        <end position="14"/>
    </location>
</feature>
<feature type="strand" evidence="14">
    <location>
        <begin position="27"/>
        <end position="33"/>
    </location>
</feature>
<feature type="helix" evidence="14">
    <location>
        <begin position="38"/>
        <end position="40"/>
    </location>
</feature>
<feature type="helix" evidence="14">
    <location>
        <begin position="43"/>
        <end position="53"/>
    </location>
</feature>
<feature type="strand" evidence="14">
    <location>
        <begin position="54"/>
        <end position="58"/>
    </location>
</feature>
<feature type="helix" evidence="14">
    <location>
        <begin position="67"/>
        <end position="77"/>
    </location>
</feature>
<feature type="strand" evidence="14">
    <location>
        <begin position="89"/>
        <end position="93"/>
    </location>
</feature>
<feature type="turn" evidence="13">
    <location>
        <begin position="100"/>
        <end position="102"/>
    </location>
</feature>
<feature type="strand" evidence="14">
    <location>
        <begin position="105"/>
        <end position="110"/>
    </location>
</feature>
<feature type="turn" evidence="14">
    <location>
        <begin position="112"/>
        <end position="115"/>
    </location>
</feature>
<feature type="strand" evidence="14">
    <location>
        <begin position="116"/>
        <end position="129"/>
    </location>
</feature>
<feature type="strand" evidence="14">
    <location>
        <begin position="139"/>
        <end position="143"/>
    </location>
</feature>
<feature type="helix" evidence="14">
    <location>
        <begin position="144"/>
        <end position="150"/>
    </location>
</feature>
<feature type="helix" evidence="14">
    <location>
        <begin position="153"/>
        <end position="161"/>
    </location>
</feature>
<feature type="strand" evidence="14">
    <location>
        <begin position="163"/>
        <end position="167"/>
    </location>
</feature>
<feature type="strand" evidence="14">
    <location>
        <begin position="176"/>
        <end position="184"/>
    </location>
</feature>
<feature type="turn" evidence="14">
    <location>
        <begin position="186"/>
        <end position="188"/>
    </location>
</feature>
<feature type="strand" evidence="14">
    <location>
        <begin position="191"/>
        <end position="193"/>
    </location>
</feature>
<feature type="strand" evidence="14">
    <location>
        <begin position="213"/>
        <end position="217"/>
    </location>
</feature>
<feature type="helix" evidence="14">
    <location>
        <begin position="219"/>
        <end position="221"/>
    </location>
</feature>
<feature type="helix" evidence="14">
    <location>
        <begin position="222"/>
        <end position="233"/>
    </location>
</feature>
<feature type="turn" evidence="14">
    <location>
        <begin position="236"/>
        <end position="238"/>
    </location>
</feature>
<feature type="strand" evidence="14">
    <location>
        <begin position="239"/>
        <end position="242"/>
    </location>
</feature>
<feature type="strand" evidence="14">
    <location>
        <begin position="249"/>
        <end position="253"/>
    </location>
</feature>
<feature type="turn" evidence="14">
    <location>
        <begin position="254"/>
        <end position="256"/>
    </location>
</feature>
<feature type="strand" evidence="14">
    <location>
        <begin position="257"/>
        <end position="261"/>
    </location>
</feature>
<feature type="strand" evidence="14">
    <location>
        <begin position="264"/>
        <end position="266"/>
    </location>
</feature>
<feature type="strand" evidence="14">
    <location>
        <begin position="270"/>
        <end position="284"/>
    </location>
</feature>
<feature type="strand" evidence="14">
    <location>
        <begin position="286"/>
        <end position="288"/>
    </location>
</feature>
<comment type="function">
    <text evidence="2 3 4">Involved in the biosynthesis of paerucumarin, a cyclized isocyano derivative of tyrosine (PubMed:18689486, PubMed:18824174). Catalyzes the 2-oxoglutarate-dependent oxidation of tyrosine isonitrile (PubMed:25866990).</text>
</comment>
<comment type="catalytic activity">
    <reaction evidence="4">
        <text>(2S)-3-(4-hydroxyphenyl)-2-isocyanopropanoate + 2-oxoglutarate + O2 = (2E)-3-(4-hydroxyphenyl)-2-isocyanoprop-2-enoate + succinate + CO2 + H2O</text>
        <dbReference type="Rhea" id="RHEA:56688"/>
        <dbReference type="ChEBI" id="CHEBI:15377"/>
        <dbReference type="ChEBI" id="CHEBI:15379"/>
        <dbReference type="ChEBI" id="CHEBI:16526"/>
        <dbReference type="ChEBI" id="CHEBI:16810"/>
        <dbReference type="ChEBI" id="CHEBI:30031"/>
        <dbReference type="ChEBI" id="CHEBI:140647"/>
        <dbReference type="ChEBI" id="CHEBI:140648"/>
        <dbReference type="EC" id="1.14.20.9"/>
    </reaction>
    <physiologicalReaction direction="left-to-right" evidence="4 9">
        <dbReference type="Rhea" id="RHEA:56689"/>
    </physiologicalReaction>
</comment>
<comment type="cofactor">
    <cofactor evidence="4">
        <name>Fe(2+)</name>
        <dbReference type="ChEBI" id="CHEBI:29033"/>
    </cofactor>
    <text evidence="1">Binds 1 Fe(2+) per subunit.</text>
</comment>
<comment type="biophysicochemical properties">
    <kinetics>
        <KM evidence="4">93 uM for tyrosine isonitrile</KM>
        <KM evidence="4">23 uM for 2-oxoglutarate</KM>
        <text evidence="4">kcat is 2.3 sec(-1).</text>
    </kinetics>
</comment>
<comment type="subunit">
    <text evidence="3">Homotrimer in solution.</text>
</comment>
<comment type="disruption phenotype">
    <text evidence="3 5">Disruption of the gene maintains the ability of the strain to produce the pyoverdine siderophore (PubMed:18824174). Deletion mutant is more sensitive to chloramphenicol and ciprofloxacin in comparison with its parent strain. This sensitivity is probably due to transcriptional repression of mexT and mexEF-oprN genes. Exogenous addition of paerucumarin resumes the expression of mexT and mexEF-oprN genes as well as resistance against chloramphenicol and ciprofloxacin (PubMed:32941967).</text>
</comment>
<comment type="similarity">
    <text evidence="8">Belongs to the TfdA dioxygenase family.</text>
</comment>